<accession>Q95KD9</accession>
<sequence>MPEQSNDYRVAVFGAGGVGKSSLVLRFVKGTFRESYIPTVEDTYRQVISCDKSICTLQITDTTGSHQFPAMQRLSISKGHAFILVYSITSRQSLEELKPIYEQICEIKGDMESIPIMLVGNKCDESPSREVQSSEAEALARTWKCAFMETSAKLNHNVKELFQELLNLEKRRTVSLQIDGKKSKQQKRKEKLKGKCVIM</sequence>
<evidence type="ECO:0000250" key="1">
    <source>
        <dbReference type="UniProtKB" id="Q5PR73"/>
    </source>
</evidence>
<evidence type="ECO:0000250" key="2">
    <source>
        <dbReference type="UniProtKB" id="Q96HU8"/>
    </source>
</evidence>
<evidence type="ECO:0000255" key="3"/>
<evidence type="ECO:0000305" key="4"/>
<name>DIRA2_MACFA</name>
<comment type="function">
    <text evidence="2">Displays low GTPase activity and exists predominantly in the GTP-bound form.</text>
</comment>
<comment type="catalytic activity">
    <reaction evidence="2">
        <text>GTP + H2O = GDP + phosphate + H(+)</text>
        <dbReference type="Rhea" id="RHEA:19669"/>
        <dbReference type="ChEBI" id="CHEBI:15377"/>
        <dbReference type="ChEBI" id="CHEBI:15378"/>
        <dbReference type="ChEBI" id="CHEBI:37565"/>
        <dbReference type="ChEBI" id="CHEBI:43474"/>
        <dbReference type="ChEBI" id="CHEBI:58189"/>
    </reaction>
</comment>
<comment type="subcellular location">
    <subcellularLocation>
        <location evidence="2">Cell membrane</location>
        <topology evidence="2">Lipid-anchor</topology>
        <orientation evidence="2">Cytoplasmic side</orientation>
    </subcellularLocation>
</comment>
<comment type="PTM">
    <text evidence="2">Ubiquitinated by the ECS(ASB11) complex via 'Lys-11'-linked ubiquitin chains, leading to its degradation by the proteasome.</text>
</comment>
<comment type="similarity">
    <text evidence="4">Belongs to the small GTPase superfamily. Di-Ras family.</text>
</comment>
<reference key="1">
    <citation type="submission" date="2001-06" db="EMBL/GenBank/DDBJ databases">
        <title>Isolation of full-length cDNA clones from macaque brain cDNA libraries.</title>
        <authorList>
            <person name="Osada N."/>
            <person name="Hida M."/>
            <person name="Kusuda J."/>
            <person name="Tanuma R."/>
            <person name="Iseki K."/>
            <person name="Hirai M."/>
            <person name="Terao K."/>
            <person name="Suzuki Y."/>
            <person name="Sugano S."/>
            <person name="Hashimoto K."/>
        </authorList>
    </citation>
    <scope>NUCLEOTIDE SEQUENCE [LARGE SCALE MRNA]</scope>
    <source>
        <tissue>Frontal cortex</tissue>
    </source>
</reference>
<protein>
    <recommendedName>
        <fullName>GTP-binding protein Di-Ras2</fullName>
        <ecNumber evidence="2">3.6.5.-</ecNumber>
    </recommendedName>
    <alternativeName>
        <fullName>Distinct subgroup of the Ras family member 2</fullName>
    </alternativeName>
</protein>
<keyword id="KW-1003">Cell membrane</keyword>
<keyword id="KW-0342">GTP-binding</keyword>
<keyword id="KW-0378">Hydrolase</keyword>
<keyword id="KW-0449">Lipoprotein</keyword>
<keyword id="KW-0472">Membrane</keyword>
<keyword id="KW-0488">Methylation</keyword>
<keyword id="KW-0547">Nucleotide-binding</keyword>
<keyword id="KW-0597">Phosphoprotein</keyword>
<keyword id="KW-0636">Prenylation</keyword>
<keyword id="KW-1185">Reference proteome</keyword>
<keyword id="KW-0832">Ubl conjugation</keyword>
<proteinExistence type="evidence at transcript level"/>
<organism>
    <name type="scientific">Macaca fascicularis</name>
    <name type="common">Crab-eating macaque</name>
    <name type="synonym">Cynomolgus monkey</name>
    <dbReference type="NCBI Taxonomy" id="9541"/>
    <lineage>
        <taxon>Eukaryota</taxon>
        <taxon>Metazoa</taxon>
        <taxon>Chordata</taxon>
        <taxon>Craniata</taxon>
        <taxon>Vertebrata</taxon>
        <taxon>Euteleostomi</taxon>
        <taxon>Mammalia</taxon>
        <taxon>Eutheria</taxon>
        <taxon>Euarchontoglires</taxon>
        <taxon>Primates</taxon>
        <taxon>Haplorrhini</taxon>
        <taxon>Catarrhini</taxon>
        <taxon>Cercopithecidae</taxon>
        <taxon>Cercopithecinae</taxon>
        <taxon>Macaca</taxon>
    </lineage>
</organism>
<feature type="chain" id="PRO_0000191651" description="GTP-binding protein Di-Ras2">
    <location>
        <begin position="1"/>
        <end position="196"/>
    </location>
</feature>
<feature type="propeptide" id="PRO_0000370778" description="Removed in mature form" evidence="3">
    <location>
        <begin position="197"/>
        <end position="199"/>
    </location>
</feature>
<feature type="short sequence motif" description="Effector region" evidence="3">
    <location>
        <begin position="36"/>
        <end position="44"/>
    </location>
</feature>
<feature type="binding site" evidence="2">
    <location>
        <begin position="14"/>
        <end position="21"/>
    </location>
    <ligand>
        <name>GTP</name>
        <dbReference type="ChEBI" id="CHEBI:37565"/>
    </ligand>
</feature>
<feature type="binding site" evidence="2">
    <location>
        <begin position="33"/>
        <end position="39"/>
    </location>
    <ligand>
        <name>GTP</name>
        <dbReference type="ChEBI" id="CHEBI:37565"/>
    </ligand>
</feature>
<feature type="binding site" evidence="2">
    <location>
        <begin position="61"/>
        <end position="65"/>
    </location>
    <ligand>
        <name>GTP</name>
        <dbReference type="ChEBI" id="CHEBI:37565"/>
    </ligand>
</feature>
<feature type="binding site" evidence="2">
    <location>
        <begin position="121"/>
        <end position="124"/>
    </location>
    <ligand>
        <name>GTP</name>
        <dbReference type="ChEBI" id="CHEBI:37565"/>
    </ligand>
</feature>
<feature type="binding site" evidence="2">
    <location>
        <begin position="152"/>
        <end position="153"/>
    </location>
    <ligand>
        <name>GTP</name>
        <dbReference type="ChEBI" id="CHEBI:37565"/>
    </ligand>
</feature>
<feature type="modified residue" description="Phosphoserine" evidence="1">
    <location>
        <position position="35"/>
    </location>
</feature>
<feature type="modified residue" description="Phosphoserine" evidence="1">
    <location>
        <position position="126"/>
    </location>
</feature>
<feature type="modified residue" description="Cysteine methyl ester" evidence="3 4">
    <location>
        <position position="196"/>
    </location>
</feature>
<feature type="lipid moiety-binding region" description="S-geranylgeranyl cysteine" evidence="4">
    <location>
        <position position="196"/>
    </location>
</feature>
<dbReference type="EC" id="3.6.5.-" evidence="2"/>
<dbReference type="EMBL" id="AB062937">
    <property type="protein sequence ID" value="BAB60730.1"/>
    <property type="molecule type" value="mRNA"/>
</dbReference>
<dbReference type="SMR" id="Q95KD9"/>
<dbReference type="STRING" id="9541.ENSMFAP00000014850"/>
<dbReference type="eggNOG" id="KOG0395">
    <property type="taxonomic scope" value="Eukaryota"/>
</dbReference>
<dbReference type="Proteomes" id="UP000233100">
    <property type="component" value="Unplaced"/>
</dbReference>
<dbReference type="GO" id="GO:0005886">
    <property type="term" value="C:plasma membrane"/>
    <property type="evidence" value="ECO:0007669"/>
    <property type="project" value="UniProtKB-SubCell"/>
</dbReference>
<dbReference type="GO" id="GO:0005525">
    <property type="term" value="F:GTP binding"/>
    <property type="evidence" value="ECO:0007669"/>
    <property type="project" value="UniProtKB-KW"/>
</dbReference>
<dbReference type="GO" id="GO:0003924">
    <property type="term" value="F:GTPase activity"/>
    <property type="evidence" value="ECO:0007669"/>
    <property type="project" value="InterPro"/>
</dbReference>
<dbReference type="GO" id="GO:0007165">
    <property type="term" value="P:signal transduction"/>
    <property type="evidence" value="ECO:0007669"/>
    <property type="project" value="InterPro"/>
</dbReference>
<dbReference type="CDD" id="cd04140">
    <property type="entry name" value="ARHI_like"/>
    <property type="match status" value="1"/>
</dbReference>
<dbReference type="FunFam" id="3.40.50.300:FF:000303">
    <property type="entry name" value="GTP-binding protein Di-Ras2"/>
    <property type="match status" value="1"/>
</dbReference>
<dbReference type="Gene3D" id="3.40.50.300">
    <property type="entry name" value="P-loop containing nucleotide triphosphate hydrolases"/>
    <property type="match status" value="1"/>
</dbReference>
<dbReference type="InterPro" id="IPR027417">
    <property type="entry name" value="P-loop_NTPase"/>
</dbReference>
<dbReference type="InterPro" id="IPR005225">
    <property type="entry name" value="Small_GTP-bd"/>
</dbReference>
<dbReference type="InterPro" id="IPR001806">
    <property type="entry name" value="Small_GTPase"/>
</dbReference>
<dbReference type="InterPro" id="IPR020849">
    <property type="entry name" value="Small_GTPase_Ras-type"/>
</dbReference>
<dbReference type="NCBIfam" id="TIGR00231">
    <property type="entry name" value="small_GTP"/>
    <property type="match status" value="1"/>
</dbReference>
<dbReference type="PANTHER" id="PTHR24070">
    <property type="entry name" value="RAS, DI-RAS, AND RHEB FAMILY MEMBERS OF SMALL GTPASE SUPERFAMILY"/>
    <property type="match status" value="1"/>
</dbReference>
<dbReference type="Pfam" id="PF00071">
    <property type="entry name" value="Ras"/>
    <property type="match status" value="1"/>
</dbReference>
<dbReference type="PRINTS" id="PR00449">
    <property type="entry name" value="RASTRNSFRMNG"/>
</dbReference>
<dbReference type="SMART" id="SM00175">
    <property type="entry name" value="RAB"/>
    <property type="match status" value="1"/>
</dbReference>
<dbReference type="SMART" id="SM00173">
    <property type="entry name" value="RAS"/>
    <property type="match status" value="1"/>
</dbReference>
<dbReference type="SMART" id="SM00174">
    <property type="entry name" value="RHO"/>
    <property type="match status" value="1"/>
</dbReference>
<dbReference type="SUPFAM" id="SSF52540">
    <property type="entry name" value="P-loop containing nucleoside triphosphate hydrolases"/>
    <property type="match status" value="1"/>
</dbReference>
<dbReference type="PROSITE" id="PS51421">
    <property type="entry name" value="RAS"/>
    <property type="match status" value="1"/>
</dbReference>
<gene>
    <name type="primary">DIRAS2</name>
    <name type="ORF">QflA-13004</name>
</gene>